<proteinExistence type="inferred from homology"/>
<evidence type="ECO:0000255" key="1">
    <source>
        <dbReference type="HAMAP-Rule" id="MF_00321"/>
    </source>
</evidence>
<organism>
    <name type="scientific">Prosthecochloris aestuarii (strain DSM 271 / SK 413)</name>
    <dbReference type="NCBI Taxonomy" id="290512"/>
    <lineage>
        <taxon>Bacteria</taxon>
        <taxon>Pseudomonadati</taxon>
        <taxon>Chlorobiota</taxon>
        <taxon>Chlorobiia</taxon>
        <taxon>Chlorobiales</taxon>
        <taxon>Chlorobiaceae</taxon>
        <taxon>Prosthecochloris</taxon>
    </lineage>
</organism>
<protein>
    <recommendedName>
        <fullName evidence="1">Probable GTP-binding protein EngB</fullName>
    </recommendedName>
</protein>
<keyword id="KW-0131">Cell cycle</keyword>
<keyword id="KW-0132">Cell division</keyword>
<keyword id="KW-0342">GTP-binding</keyword>
<keyword id="KW-0460">Magnesium</keyword>
<keyword id="KW-0479">Metal-binding</keyword>
<keyword id="KW-0547">Nucleotide-binding</keyword>
<keyword id="KW-0717">Septation</keyword>
<reference key="1">
    <citation type="submission" date="2008-06" db="EMBL/GenBank/DDBJ databases">
        <title>Complete sequence of chromosome of Prosthecochloris aestuarii DSM 271.</title>
        <authorList>
            <consortium name="US DOE Joint Genome Institute"/>
            <person name="Lucas S."/>
            <person name="Copeland A."/>
            <person name="Lapidus A."/>
            <person name="Glavina del Rio T."/>
            <person name="Dalin E."/>
            <person name="Tice H."/>
            <person name="Bruce D."/>
            <person name="Goodwin L."/>
            <person name="Pitluck S."/>
            <person name="Schmutz J."/>
            <person name="Larimer F."/>
            <person name="Land M."/>
            <person name="Hauser L."/>
            <person name="Kyrpides N."/>
            <person name="Anderson I."/>
            <person name="Liu Z."/>
            <person name="Li T."/>
            <person name="Zhao F."/>
            <person name="Overmann J."/>
            <person name="Bryant D.A."/>
            <person name="Richardson P."/>
        </authorList>
    </citation>
    <scope>NUCLEOTIDE SEQUENCE [LARGE SCALE GENOMIC DNA]</scope>
    <source>
        <strain>DSM 271 / SK 413</strain>
    </source>
</reference>
<feature type="chain" id="PRO_1000115994" description="Probable GTP-binding protein EngB">
    <location>
        <begin position="1"/>
        <end position="192"/>
    </location>
</feature>
<feature type="domain" description="EngB-type G" evidence="1">
    <location>
        <begin position="22"/>
        <end position="192"/>
    </location>
</feature>
<feature type="binding site" evidence="1">
    <location>
        <begin position="30"/>
        <end position="37"/>
    </location>
    <ligand>
        <name>GTP</name>
        <dbReference type="ChEBI" id="CHEBI:37565"/>
    </ligand>
</feature>
<feature type="binding site" evidence="1">
    <location>
        <position position="37"/>
    </location>
    <ligand>
        <name>Mg(2+)</name>
        <dbReference type="ChEBI" id="CHEBI:18420"/>
    </ligand>
</feature>
<feature type="binding site" evidence="1">
    <location>
        <begin position="57"/>
        <end position="61"/>
    </location>
    <ligand>
        <name>GTP</name>
        <dbReference type="ChEBI" id="CHEBI:37565"/>
    </ligand>
</feature>
<feature type="binding site" evidence="1">
    <location>
        <position position="59"/>
    </location>
    <ligand>
        <name>Mg(2+)</name>
        <dbReference type="ChEBI" id="CHEBI:18420"/>
    </ligand>
</feature>
<feature type="binding site" evidence="1">
    <location>
        <begin position="75"/>
        <end position="78"/>
    </location>
    <ligand>
        <name>GTP</name>
        <dbReference type="ChEBI" id="CHEBI:37565"/>
    </ligand>
</feature>
<feature type="binding site" evidence="1">
    <location>
        <begin position="142"/>
        <end position="145"/>
    </location>
    <ligand>
        <name>GTP</name>
        <dbReference type="ChEBI" id="CHEBI:37565"/>
    </ligand>
</feature>
<feature type="binding site" evidence="1">
    <location>
        <begin position="172"/>
        <end position="174"/>
    </location>
    <ligand>
        <name>GTP</name>
        <dbReference type="ChEBI" id="CHEBI:37565"/>
    </ligand>
</feature>
<comment type="function">
    <text evidence="1">Necessary for normal cell division and for the maintenance of normal septation.</text>
</comment>
<comment type="cofactor">
    <cofactor evidence="1">
        <name>Mg(2+)</name>
        <dbReference type="ChEBI" id="CHEBI:18420"/>
    </cofactor>
</comment>
<comment type="similarity">
    <text evidence="1">Belongs to the TRAFAC class TrmE-Era-EngA-EngB-Septin-like GTPase superfamily. EngB GTPase family.</text>
</comment>
<accession>B4S596</accession>
<gene>
    <name evidence="1" type="primary">engB</name>
    <name type="ordered locus">Paes_2032</name>
</gene>
<name>ENGB_PROA2</name>
<sequence length="192" mass="21822">MKIDSATFYKSCSELKGLPVSSLPEIVFVGRSNVGKSTLLNTLTGRKALAKTSSTPGKTQLINYFTINDRLYFVDLPGYGYAKVAKGQRYEWGRLLGGYISEREEISLVVLLIDSRHPDMESDQQMIEFLEYYQRPYGIVLTKYDKLKQKEKSRVRKALKSFSLKTKFIVNYSALSGEGKESLLEQLENYTG</sequence>
<dbReference type="EMBL" id="CP001108">
    <property type="protein sequence ID" value="ACF47042.1"/>
    <property type="molecule type" value="Genomic_DNA"/>
</dbReference>
<dbReference type="RefSeq" id="WP_012506575.1">
    <property type="nucleotide sequence ID" value="NC_011059.1"/>
</dbReference>
<dbReference type="SMR" id="B4S596"/>
<dbReference type="STRING" id="290512.Paes_2032"/>
<dbReference type="KEGG" id="paa:Paes_2032"/>
<dbReference type="eggNOG" id="COG0218">
    <property type="taxonomic scope" value="Bacteria"/>
</dbReference>
<dbReference type="HOGENOM" id="CLU_033732_3_0_10"/>
<dbReference type="Proteomes" id="UP000002725">
    <property type="component" value="Chromosome"/>
</dbReference>
<dbReference type="GO" id="GO:0005829">
    <property type="term" value="C:cytosol"/>
    <property type="evidence" value="ECO:0007669"/>
    <property type="project" value="TreeGrafter"/>
</dbReference>
<dbReference type="GO" id="GO:0005525">
    <property type="term" value="F:GTP binding"/>
    <property type="evidence" value="ECO:0007669"/>
    <property type="project" value="UniProtKB-UniRule"/>
</dbReference>
<dbReference type="GO" id="GO:0046872">
    <property type="term" value="F:metal ion binding"/>
    <property type="evidence" value="ECO:0007669"/>
    <property type="project" value="UniProtKB-KW"/>
</dbReference>
<dbReference type="GO" id="GO:0000917">
    <property type="term" value="P:division septum assembly"/>
    <property type="evidence" value="ECO:0007669"/>
    <property type="project" value="UniProtKB-KW"/>
</dbReference>
<dbReference type="CDD" id="cd01876">
    <property type="entry name" value="YihA_EngB"/>
    <property type="match status" value="1"/>
</dbReference>
<dbReference type="FunFam" id="3.40.50.300:FF:000098">
    <property type="entry name" value="Probable GTP-binding protein EngB"/>
    <property type="match status" value="1"/>
</dbReference>
<dbReference type="Gene3D" id="3.40.50.300">
    <property type="entry name" value="P-loop containing nucleotide triphosphate hydrolases"/>
    <property type="match status" value="1"/>
</dbReference>
<dbReference type="HAMAP" id="MF_00321">
    <property type="entry name" value="GTPase_EngB"/>
    <property type="match status" value="1"/>
</dbReference>
<dbReference type="InterPro" id="IPR030393">
    <property type="entry name" value="G_ENGB_dom"/>
</dbReference>
<dbReference type="InterPro" id="IPR006073">
    <property type="entry name" value="GTP-bd"/>
</dbReference>
<dbReference type="InterPro" id="IPR019987">
    <property type="entry name" value="GTP-bd_ribosome_bio_YsxC"/>
</dbReference>
<dbReference type="InterPro" id="IPR027417">
    <property type="entry name" value="P-loop_NTPase"/>
</dbReference>
<dbReference type="InterPro" id="IPR005225">
    <property type="entry name" value="Small_GTP-bd"/>
</dbReference>
<dbReference type="NCBIfam" id="TIGR03598">
    <property type="entry name" value="GTPase_YsxC"/>
    <property type="match status" value="1"/>
</dbReference>
<dbReference type="NCBIfam" id="TIGR00231">
    <property type="entry name" value="small_GTP"/>
    <property type="match status" value="1"/>
</dbReference>
<dbReference type="PANTHER" id="PTHR11649:SF13">
    <property type="entry name" value="ENGB-TYPE G DOMAIN-CONTAINING PROTEIN"/>
    <property type="match status" value="1"/>
</dbReference>
<dbReference type="PANTHER" id="PTHR11649">
    <property type="entry name" value="MSS1/TRME-RELATED GTP-BINDING PROTEIN"/>
    <property type="match status" value="1"/>
</dbReference>
<dbReference type="Pfam" id="PF01926">
    <property type="entry name" value="MMR_HSR1"/>
    <property type="match status" value="1"/>
</dbReference>
<dbReference type="SUPFAM" id="SSF52540">
    <property type="entry name" value="P-loop containing nucleoside triphosphate hydrolases"/>
    <property type="match status" value="1"/>
</dbReference>
<dbReference type="PROSITE" id="PS51706">
    <property type="entry name" value="G_ENGB"/>
    <property type="match status" value="1"/>
</dbReference>